<protein>
    <recommendedName>
        <fullName evidence="1">Glutamate--tRNA ligase</fullName>
        <ecNumber evidence="1">6.1.1.17</ecNumber>
    </recommendedName>
    <alternativeName>
        <fullName evidence="1">Glutamyl-tRNA synthetase</fullName>
        <shortName evidence="1">GluRS</shortName>
    </alternativeName>
</protein>
<sequence length="475" mass="53290">MTVKTRFAPSPTGYLHVGGARTALYSWLYAKNQGGEFVLRIEDTDLERNSQEAVDAILEGMEWLGLEWNEGPYFQTQRFDRYNEMVDKLLEEDKAYKCYASKELLDEVRAEQEANKEMPRYDANHPKIKAANEAAKDGEPCVIRFRNPKEGSVVFDDQIRGRIEISNTQMDDLIIRRTDGSPTYNFCVVVDDWDMGITHVVRGEDHINNTPRQINIYEALGAPVPTFAHCAMILGDDGAKLSKRHGAVSVMQYRDMGYLPAALNNYLVRLGWSHGDQEIFTQEEMINLFSLNAVSKSASAFNTDKLQWLNNHYIKNSDPAYVAEHLQWHLDQQKLDVTNGPAITEVIKLVGERCNTLVELAEQIGYFYEDFAEFEAGAAKKHLRGVAKEPLELALAKAEALTEWTTANIKDGVIAAVCEELEIGMGKIGMPLRVAVTGGGQSPSVDAVMELIGKERCVARIKMALEFIAEREANA</sequence>
<keyword id="KW-0030">Aminoacyl-tRNA synthetase</keyword>
<keyword id="KW-0067">ATP-binding</keyword>
<keyword id="KW-0963">Cytoplasm</keyword>
<keyword id="KW-0436">Ligase</keyword>
<keyword id="KW-0547">Nucleotide-binding</keyword>
<keyword id="KW-0648">Protein biosynthesis</keyword>
<feature type="chain" id="PRO_1000001983" description="Glutamate--tRNA ligase">
    <location>
        <begin position="1"/>
        <end position="475"/>
    </location>
</feature>
<feature type="short sequence motif" description="'HIGH' region" evidence="1">
    <location>
        <begin position="9"/>
        <end position="19"/>
    </location>
</feature>
<feature type="short sequence motif" description="'KMSKS' region" evidence="1">
    <location>
        <begin position="240"/>
        <end position="244"/>
    </location>
</feature>
<feature type="binding site" evidence="1">
    <location>
        <position position="243"/>
    </location>
    <ligand>
        <name>ATP</name>
        <dbReference type="ChEBI" id="CHEBI:30616"/>
    </ligand>
</feature>
<reference key="1">
    <citation type="submission" date="2007-08" db="EMBL/GenBank/DDBJ databases">
        <authorList>
            <consortium name="The Vibrio harveyi Genome Sequencing Project"/>
            <person name="Bassler B."/>
            <person name="Clifton S.W."/>
            <person name="Fulton L."/>
            <person name="Delehaunty K."/>
            <person name="Fronick C."/>
            <person name="Harrison M."/>
            <person name="Markivic C."/>
            <person name="Fulton R."/>
            <person name="Tin-Wollam A.-M."/>
            <person name="Shah N."/>
            <person name="Pepin K."/>
            <person name="Nash W."/>
            <person name="Thiruvilangam P."/>
            <person name="Bhonagiri V."/>
            <person name="Waters C."/>
            <person name="Tu K.C."/>
            <person name="Irgon J."/>
            <person name="Wilson R.K."/>
        </authorList>
    </citation>
    <scope>NUCLEOTIDE SEQUENCE [LARGE SCALE GENOMIC DNA]</scope>
    <source>
        <strain>ATCC BAA-1116 / BB120</strain>
    </source>
</reference>
<proteinExistence type="inferred from homology"/>
<name>SYE_VIBC1</name>
<organism>
    <name type="scientific">Vibrio campbellii (strain ATCC BAA-1116)</name>
    <dbReference type="NCBI Taxonomy" id="2902295"/>
    <lineage>
        <taxon>Bacteria</taxon>
        <taxon>Pseudomonadati</taxon>
        <taxon>Pseudomonadota</taxon>
        <taxon>Gammaproteobacteria</taxon>
        <taxon>Vibrionales</taxon>
        <taxon>Vibrionaceae</taxon>
        <taxon>Vibrio</taxon>
    </lineage>
</organism>
<accession>A7MY61</accession>
<gene>
    <name evidence="1" type="primary">gltX</name>
    <name type="ordered locus">VIBHAR_01271</name>
</gene>
<dbReference type="EC" id="6.1.1.17" evidence="1"/>
<dbReference type="EMBL" id="CP000789">
    <property type="protein sequence ID" value="ABU70249.1"/>
    <property type="molecule type" value="Genomic_DNA"/>
</dbReference>
<dbReference type="RefSeq" id="WP_012127215.1">
    <property type="nucleotide sequence ID" value="NC_009783.1"/>
</dbReference>
<dbReference type="SMR" id="A7MY61"/>
<dbReference type="KEGG" id="vha:VIBHAR_01271"/>
<dbReference type="PATRIC" id="fig|338187.25.peg.1374"/>
<dbReference type="Proteomes" id="UP000008152">
    <property type="component" value="Chromosome I"/>
</dbReference>
<dbReference type="GO" id="GO:0005829">
    <property type="term" value="C:cytosol"/>
    <property type="evidence" value="ECO:0007669"/>
    <property type="project" value="TreeGrafter"/>
</dbReference>
<dbReference type="GO" id="GO:0005524">
    <property type="term" value="F:ATP binding"/>
    <property type="evidence" value="ECO:0007669"/>
    <property type="project" value="UniProtKB-UniRule"/>
</dbReference>
<dbReference type="GO" id="GO:0004818">
    <property type="term" value="F:glutamate-tRNA ligase activity"/>
    <property type="evidence" value="ECO:0007669"/>
    <property type="project" value="UniProtKB-UniRule"/>
</dbReference>
<dbReference type="GO" id="GO:0000049">
    <property type="term" value="F:tRNA binding"/>
    <property type="evidence" value="ECO:0007669"/>
    <property type="project" value="InterPro"/>
</dbReference>
<dbReference type="GO" id="GO:0008270">
    <property type="term" value="F:zinc ion binding"/>
    <property type="evidence" value="ECO:0007669"/>
    <property type="project" value="InterPro"/>
</dbReference>
<dbReference type="GO" id="GO:0006424">
    <property type="term" value="P:glutamyl-tRNA aminoacylation"/>
    <property type="evidence" value="ECO:0007669"/>
    <property type="project" value="UniProtKB-UniRule"/>
</dbReference>
<dbReference type="CDD" id="cd00808">
    <property type="entry name" value="GluRS_core"/>
    <property type="match status" value="1"/>
</dbReference>
<dbReference type="FunFam" id="3.40.50.620:FF:000007">
    <property type="entry name" value="Glutamate--tRNA ligase"/>
    <property type="match status" value="1"/>
</dbReference>
<dbReference type="Gene3D" id="1.10.10.350">
    <property type="match status" value="1"/>
</dbReference>
<dbReference type="Gene3D" id="3.40.50.620">
    <property type="entry name" value="HUPs"/>
    <property type="match status" value="1"/>
</dbReference>
<dbReference type="HAMAP" id="MF_00022">
    <property type="entry name" value="Glu_tRNA_synth_type1"/>
    <property type="match status" value="1"/>
</dbReference>
<dbReference type="InterPro" id="IPR045462">
    <property type="entry name" value="aa-tRNA-synth_I_cd-bd"/>
</dbReference>
<dbReference type="InterPro" id="IPR020751">
    <property type="entry name" value="aa-tRNA-synth_I_codon-bd_sub2"/>
</dbReference>
<dbReference type="InterPro" id="IPR001412">
    <property type="entry name" value="aa-tRNA-synth_I_CS"/>
</dbReference>
<dbReference type="InterPro" id="IPR008925">
    <property type="entry name" value="aa_tRNA-synth_I_cd-bd_sf"/>
</dbReference>
<dbReference type="InterPro" id="IPR004527">
    <property type="entry name" value="Glu-tRNA-ligase_bac/mito"/>
</dbReference>
<dbReference type="InterPro" id="IPR000924">
    <property type="entry name" value="Glu/Gln-tRNA-synth"/>
</dbReference>
<dbReference type="InterPro" id="IPR020058">
    <property type="entry name" value="Glu/Gln-tRNA-synth_Ib_cat-dom"/>
</dbReference>
<dbReference type="InterPro" id="IPR049940">
    <property type="entry name" value="GluQ/Sye"/>
</dbReference>
<dbReference type="InterPro" id="IPR033910">
    <property type="entry name" value="GluRS_core"/>
</dbReference>
<dbReference type="InterPro" id="IPR014729">
    <property type="entry name" value="Rossmann-like_a/b/a_fold"/>
</dbReference>
<dbReference type="NCBIfam" id="TIGR00464">
    <property type="entry name" value="gltX_bact"/>
    <property type="match status" value="1"/>
</dbReference>
<dbReference type="PANTHER" id="PTHR43311">
    <property type="entry name" value="GLUTAMATE--TRNA LIGASE"/>
    <property type="match status" value="1"/>
</dbReference>
<dbReference type="PANTHER" id="PTHR43311:SF2">
    <property type="entry name" value="GLUTAMATE--TRNA LIGASE, MITOCHONDRIAL-RELATED"/>
    <property type="match status" value="1"/>
</dbReference>
<dbReference type="Pfam" id="PF19269">
    <property type="entry name" value="Anticodon_2"/>
    <property type="match status" value="1"/>
</dbReference>
<dbReference type="Pfam" id="PF00749">
    <property type="entry name" value="tRNA-synt_1c"/>
    <property type="match status" value="1"/>
</dbReference>
<dbReference type="PRINTS" id="PR00987">
    <property type="entry name" value="TRNASYNTHGLU"/>
</dbReference>
<dbReference type="SUPFAM" id="SSF48163">
    <property type="entry name" value="An anticodon-binding domain of class I aminoacyl-tRNA synthetases"/>
    <property type="match status" value="1"/>
</dbReference>
<dbReference type="SUPFAM" id="SSF52374">
    <property type="entry name" value="Nucleotidylyl transferase"/>
    <property type="match status" value="1"/>
</dbReference>
<dbReference type="PROSITE" id="PS00178">
    <property type="entry name" value="AA_TRNA_LIGASE_I"/>
    <property type="match status" value="1"/>
</dbReference>
<evidence type="ECO:0000255" key="1">
    <source>
        <dbReference type="HAMAP-Rule" id="MF_00022"/>
    </source>
</evidence>
<comment type="function">
    <text evidence="1">Catalyzes the attachment of glutamate to tRNA(Glu) in a two-step reaction: glutamate is first activated by ATP to form Glu-AMP and then transferred to the acceptor end of tRNA(Glu).</text>
</comment>
<comment type="catalytic activity">
    <reaction evidence="1">
        <text>tRNA(Glu) + L-glutamate + ATP = L-glutamyl-tRNA(Glu) + AMP + diphosphate</text>
        <dbReference type="Rhea" id="RHEA:23540"/>
        <dbReference type="Rhea" id="RHEA-COMP:9663"/>
        <dbReference type="Rhea" id="RHEA-COMP:9680"/>
        <dbReference type="ChEBI" id="CHEBI:29985"/>
        <dbReference type="ChEBI" id="CHEBI:30616"/>
        <dbReference type="ChEBI" id="CHEBI:33019"/>
        <dbReference type="ChEBI" id="CHEBI:78442"/>
        <dbReference type="ChEBI" id="CHEBI:78520"/>
        <dbReference type="ChEBI" id="CHEBI:456215"/>
        <dbReference type="EC" id="6.1.1.17"/>
    </reaction>
</comment>
<comment type="subunit">
    <text evidence="1">Monomer.</text>
</comment>
<comment type="subcellular location">
    <subcellularLocation>
        <location evidence="1">Cytoplasm</location>
    </subcellularLocation>
</comment>
<comment type="similarity">
    <text evidence="1">Belongs to the class-I aminoacyl-tRNA synthetase family. Glutamate--tRNA ligase type 1 subfamily.</text>
</comment>